<dbReference type="EMBL" id="BC059759">
    <property type="protein sequence ID" value="AAH59759.1"/>
    <property type="molecule type" value="mRNA"/>
</dbReference>
<dbReference type="RefSeq" id="NP_988871.1">
    <property type="nucleotide sequence ID" value="NM_203540.1"/>
</dbReference>
<dbReference type="SMR" id="Q6PBD6"/>
<dbReference type="STRING" id="8364.ENSXETP00000015781"/>
<dbReference type="PaxDb" id="8364-ENSXETP00000020997"/>
<dbReference type="DNASU" id="394466"/>
<dbReference type="GeneID" id="394466"/>
<dbReference type="KEGG" id="xtr:394466"/>
<dbReference type="AGR" id="Xenbase:XB-GENE-5751496"/>
<dbReference type="CTD" id="80349"/>
<dbReference type="Xenbase" id="XB-GENE-5751496">
    <property type="gene designation" value="skic8"/>
</dbReference>
<dbReference type="eggNOG" id="KOG4155">
    <property type="taxonomic scope" value="Eukaryota"/>
</dbReference>
<dbReference type="HOGENOM" id="CLU_000288_57_11_1"/>
<dbReference type="InParanoid" id="Q6PBD6"/>
<dbReference type="OMA" id="LDSSMCL"/>
<dbReference type="OrthoDB" id="17410at2759"/>
<dbReference type="PhylomeDB" id="Q6PBD6"/>
<dbReference type="TreeFam" id="TF324549"/>
<dbReference type="Reactome" id="R-XTR-112382">
    <property type="pathway name" value="Formation of RNA Pol II elongation complex"/>
</dbReference>
<dbReference type="Reactome" id="R-XTR-429958">
    <property type="pathway name" value="mRNA decay by 3' to 5' exoribonuclease"/>
</dbReference>
<dbReference type="Reactome" id="R-XTR-674695">
    <property type="pathway name" value="RNA Polymerase II Pre-transcription Events"/>
</dbReference>
<dbReference type="Reactome" id="R-XTR-75955">
    <property type="pathway name" value="RNA Polymerase II Transcription Elongation"/>
</dbReference>
<dbReference type="Reactome" id="R-XTR-8866654">
    <property type="pathway name" value="E3 ubiquitin ligases ubiquitinate target proteins"/>
</dbReference>
<dbReference type="Proteomes" id="UP000008143">
    <property type="component" value="Chromosome 2"/>
</dbReference>
<dbReference type="Bgee" id="ENSXETG00000009511">
    <property type="expression patterns" value="Expressed in egg cell and 15 other cell types or tissues"/>
</dbReference>
<dbReference type="ExpressionAtlas" id="Q6PBD6">
    <property type="expression patterns" value="baseline"/>
</dbReference>
<dbReference type="GO" id="GO:0016593">
    <property type="term" value="C:Cdc73/Paf1 complex"/>
    <property type="evidence" value="ECO:0000250"/>
    <property type="project" value="UniProtKB"/>
</dbReference>
<dbReference type="GO" id="GO:0005737">
    <property type="term" value="C:cytoplasm"/>
    <property type="evidence" value="ECO:0000250"/>
    <property type="project" value="UniProtKB"/>
</dbReference>
<dbReference type="GO" id="GO:0000791">
    <property type="term" value="C:euchromatin"/>
    <property type="evidence" value="ECO:0000250"/>
    <property type="project" value="UniProtKB"/>
</dbReference>
<dbReference type="GO" id="GO:0005634">
    <property type="term" value="C:nucleus"/>
    <property type="evidence" value="ECO:0000250"/>
    <property type="project" value="UniProtKB"/>
</dbReference>
<dbReference type="GO" id="GO:0055087">
    <property type="term" value="C:Ski complex"/>
    <property type="evidence" value="ECO:0000250"/>
    <property type="project" value="UniProtKB"/>
</dbReference>
<dbReference type="GO" id="GO:0070478">
    <property type="term" value="P:nuclear-transcribed mRNA catabolic process, 3'-5' exonucleolytic nonsense-mediated decay"/>
    <property type="evidence" value="ECO:0000250"/>
    <property type="project" value="UniProtKB"/>
</dbReference>
<dbReference type="GO" id="GO:0072344">
    <property type="term" value="P:rescue of stalled ribosome"/>
    <property type="evidence" value="ECO:0000250"/>
    <property type="project" value="UniProtKB"/>
</dbReference>
<dbReference type="GO" id="GO:0006368">
    <property type="term" value="P:transcription elongation by RNA polymerase II"/>
    <property type="evidence" value="ECO:0000250"/>
    <property type="project" value="UniProtKB"/>
</dbReference>
<dbReference type="CDD" id="cd00200">
    <property type="entry name" value="WD40"/>
    <property type="match status" value="1"/>
</dbReference>
<dbReference type="FunFam" id="2.130.10.10:FF:000094">
    <property type="entry name" value="WD repeat-containing protein 61"/>
    <property type="match status" value="1"/>
</dbReference>
<dbReference type="Gene3D" id="2.130.10.10">
    <property type="entry name" value="YVTN repeat-like/Quinoprotein amine dehydrogenase"/>
    <property type="match status" value="1"/>
</dbReference>
<dbReference type="InterPro" id="IPR055442">
    <property type="entry name" value="Beta-prop_EML-like_2nd"/>
</dbReference>
<dbReference type="InterPro" id="IPR020472">
    <property type="entry name" value="G-protein_beta_WD-40_rep"/>
</dbReference>
<dbReference type="InterPro" id="IPR051510">
    <property type="entry name" value="SKI8"/>
</dbReference>
<dbReference type="InterPro" id="IPR015943">
    <property type="entry name" value="WD40/YVTN_repeat-like_dom_sf"/>
</dbReference>
<dbReference type="InterPro" id="IPR019775">
    <property type="entry name" value="WD40_repeat_CS"/>
</dbReference>
<dbReference type="InterPro" id="IPR036322">
    <property type="entry name" value="WD40_repeat_dom_sf"/>
</dbReference>
<dbReference type="InterPro" id="IPR001680">
    <property type="entry name" value="WD40_rpt"/>
</dbReference>
<dbReference type="PANTHER" id="PTHR44090:SF1">
    <property type="entry name" value="SUPERKILLER COMPLEX PROTEIN 8"/>
    <property type="match status" value="1"/>
</dbReference>
<dbReference type="PANTHER" id="PTHR44090">
    <property type="entry name" value="WD REPEAT-CONTAINING PROTEIN 61"/>
    <property type="match status" value="1"/>
</dbReference>
<dbReference type="Pfam" id="PF23414">
    <property type="entry name" value="Beta-prop_EML_2"/>
    <property type="match status" value="1"/>
</dbReference>
<dbReference type="Pfam" id="PF00400">
    <property type="entry name" value="WD40"/>
    <property type="match status" value="3"/>
</dbReference>
<dbReference type="PRINTS" id="PR00320">
    <property type="entry name" value="GPROTEINBRPT"/>
</dbReference>
<dbReference type="SMART" id="SM00320">
    <property type="entry name" value="WD40"/>
    <property type="match status" value="7"/>
</dbReference>
<dbReference type="SUPFAM" id="SSF50978">
    <property type="entry name" value="WD40 repeat-like"/>
    <property type="match status" value="1"/>
</dbReference>
<dbReference type="PROSITE" id="PS00678">
    <property type="entry name" value="WD_REPEATS_1"/>
    <property type="match status" value="1"/>
</dbReference>
<dbReference type="PROSITE" id="PS50082">
    <property type="entry name" value="WD_REPEATS_2"/>
    <property type="match status" value="6"/>
</dbReference>
<dbReference type="PROSITE" id="PS50294">
    <property type="entry name" value="WD_REPEATS_REGION"/>
    <property type="match status" value="1"/>
</dbReference>
<comment type="function">
    <text evidence="1">Component of the PAF1 complex (PAF1C) which has multiple functions during transcription by RNA polymerase II and is implicated in regulation of development and maintenance of embryonic stem cell pluripotency. PAF1C associates with RNA polymerase II through interaction with POLR2A CTD non-phosphorylated and 'Ser-2'- and 'Ser-5'-phosphorylated forms and is involved in transcriptional elongation, acting both independently and synergistically with TCEA1 and in cooperation with the DSIF complex and HTATSF1. Also acts as a component of the SKI complex, a multiprotein complex that assists the RNA-degrading exosome during the mRNA decay and quality-control pathways. The SKI complex catalyzes mRNA extraction from 80S ribosomal complexes in the 3'-5' direction and channels mRNA to the cytosolic exosome for degradation.</text>
</comment>
<comment type="subunit">
    <text evidence="1">Component of the PAF1 complex (By similarity). Component of the SKI complex (By similarity).</text>
</comment>
<comment type="subcellular location">
    <subcellularLocation>
        <location evidence="1">Nucleus</location>
    </subcellularLocation>
    <subcellularLocation>
        <location evidence="1">Cytoplasm</location>
    </subcellularLocation>
</comment>
<comment type="similarity">
    <text evidence="2">Belongs to the SKI8 family.</text>
</comment>
<accession>Q6PBD6</accession>
<proteinExistence type="evidence at transcript level"/>
<sequence>MSTQYSILFKQEHAHEDAIWSVGWGKNSNDGSELVISGSLDDLVKVWKWSDERLELQSTLEGHQLGVVSVDVSPSGNIMASSSLDAHIRLWDLESGKQIRAIDAGPVDAWSVAFSPDSQHLATGSHVGKVNIFGVETGKKEYSLDTRGKFILSIAYSPDGKYLASGAIDGIINIFDIATGKLLHTLEGHAMPIRSLTFSPDSQLLVTASDDGYIKIYEVQHASLAATLSGHGSWVLNVAFSPDDTHFVSSSSDKSVKVWDVSARTCVHTFLDHQDQVWGVKYNKNGSKIVSVADDQEIHVYDCPI</sequence>
<feature type="chain" id="PRO_0000245857" description="Superkiller complex protein 8">
    <location>
        <begin position="1"/>
        <end position="305"/>
    </location>
</feature>
<feature type="repeat" description="WD 1">
    <location>
        <begin position="14"/>
        <end position="57"/>
    </location>
</feature>
<feature type="repeat" description="WD 2">
    <location>
        <begin position="62"/>
        <end position="101"/>
    </location>
</feature>
<feature type="repeat" description="WD 3">
    <location>
        <begin position="104"/>
        <end position="143"/>
    </location>
</feature>
<feature type="repeat" description="WD 4">
    <location>
        <begin position="146"/>
        <end position="187"/>
    </location>
</feature>
<feature type="repeat" description="WD 5">
    <location>
        <begin position="188"/>
        <end position="227"/>
    </location>
</feature>
<feature type="repeat" description="WD 6">
    <location>
        <begin position="230"/>
        <end position="269"/>
    </location>
</feature>
<feature type="repeat" description="WD 7">
    <location>
        <begin position="272"/>
        <end position="305"/>
    </location>
</feature>
<evidence type="ECO:0000250" key="1">
    <source>
        <dbReference type="UniProtKB" id="Q9GZS3"/>
    </source>
</evidence>
<evidence type="ECO:0000305" key="2"/>
<keyword id="KW-0963">Cytoplasm</keyword>
<keyword id="KW-0539">Nucleus</keyword>
<keyword id="KW-1185">Reference proteome</keyword>
<keyword id="KW-0677">Repeat</keyword>
<keyword id="KW-0853">WD repeat</keyword>
<protein>
    <recommendedName>
        <fullName>Superkiller complex protein 8</fullName>
        <shortName>Ski8</shortName>
    </recommendedName>
    <alternativeName>
        <fullName>WD repeat-containing protein 61</fullName>
    </alternativeName>
</protein>
<name>SKI8_XENTR</name>
<organism>
    <name type="scientific">Xenopus tropicalis</name>
    <name type="common">Western clawed frog</name>
    <name type="synonym">Silurana tropicalis</name>
    <dbReference type="NCBI Taxonomy" id="8364"/>
    <lineage>
        <taxon>Eukaryota</taxon>
        <taxon>Metazoa</taxon>
        <taxon>Chordata</taxon>
        <taxon>Craniata</taxon>
        <taxon>Vertebrata</taxon>
        <taxon>Euteleostomi</taxon>
        <taxon>Amphibia</taxon>
        <taxon>Batrachia</taxon>
        <taxon>Anura</taxon>
        <taxon>Pipoidea</taxon>
        <taxon>Pipidae</taxon>
        <taxon>Xenopodinae</taxon>
        <taxon>Xenopus</taxon>
        <taxon>Silurana</taxon>
    </lineage>
</organism>
<gene>
    <name type="primary">skic8</name>
    <name type="synonym">wdr61</name>
</gene>
<reference key="1">
    <citation type="submission" date="2003-10" db="EMBL/GenBank/DDBJ databases">
        <authorList>
            <consortium name="NIH - Xenopus Gene Collection (XGC) project"/>
        </authorList>
    </citation>
    <scope>NUCLEOTIDE SEQUENCE [LARGE SCALE MRNA]</scope>
    <source>
        <tissue>Embryo</tissue>
    </source>
</reference>